<dbReference type="EMBL" id="DQ238552">
    <property type="protein sequence ID" value="ABB83545.1"/>
    <property type="molecule type" value="Genomic_DNA"/>
</dbReference>
<dbReference type="FunCoup" id="Q2Q1P1">
    <property type="interactions" value="678"/>
</dbReference>
<dbReference type="STRING" id="9593.ENSGGOP00000009057"/>
<dbReference type="GlyCosmos" id="Q2Q1P1">
    <property type="glycosylation" value="2 sites, No reported glycans"/>
</dbReference>
<dbReference type="InParanoid" id="Q2Q1P1"/>
<dbReference type="Proteomes" id="UP000001519">
    <property type="component" value="Unplaced"/>
</dbReference>
<dbReference type="GO" id="GO:0005737">
    <property type="term" value="C:cytoplasm"/>
    <property type="evidence" value="ECO:0000318"/>
    <property type="project" value="GO_Central"/>
</dbReference>
<dbReference type="GO" id="GO:0005615">
    <property type="term" value="C:extracellular space"/>
    <property type="evidence" value="ECO:0000318"/>
    <property type="project" value="GO_Central"/>
</dbReference>
<dbReference type="GO" id="GO:0005179">
    <property type="term" value="F:hormone activity"/>
    <property type="evidence" value="ECO:0007669"/>
    <property type="project" value="UniProtKB-KW"/>
</dbReference>
<dbReference type="GO" id="GO:0007186">
    <property type="term" value="P:G protein-coupled receptor signaling pathway"/>
    <property type="evidence" value="ECO:0000318"/>
    <property type="project" value="GO_Central"/>
</dbReference>
<dbReference type="CDD" id="cd00069">
    <property type="entry name" value="GHB_like"/>
    <property type="match status" value="1"/>
</dbReference>
<dbReference type="FunFam" id="2.10.90.10:FF:000007">
    <property type="entry name" value="Luteinizing hormone beta subunit"/>
    <property type="match status" value="1"/>
</dbReference>
<dbReference type="Gene3D" id="2.10.90.10">
    <property type="entry name" value="Cystine-knot cytokines"/>
    <property type="match status" value="1"/>
</dbReference>
<dbReference type="InterPro" id="IPR029034">
    <property type="entry name" value="Cystine-knot_cytokine"/>
</dbReference>
<dbReference type="InterPro" id="IPR006208">
    <property type="entry name" value="Glyco_hormone_CN"/>
</dbReference>
<dbReference type="InterPro" id="IPR001545">
    <property type="entry name" value="Gonadotropin_bsu"/>
</dbReference>
<dbReference type="InterPro" id="IPR018245">
    <property type="entry name" value="Gonadotropin_bsu_CS"/>
</dbReference>
<dbReference type="PANTHER" id="PTHR11515">
    <property type="entry name" value="GLYCOPROTEIN HORMONE BETA CHAIN"/>
    <property type="match status" value="1"/>
</dbReference>
<dbReference type="PANTHER" id="PTHR11515:SF11">
    <property type="entry name" value="LUTROPIN SUBUNIT BETA"/>
    <property type="match status" value="1"/>
</dbReference>
<dbReference type="Pfam" id="PF00007">
    <property type="entry name" value="Cys_knot"/>
    <property type="match status" value="1"/>
</dbReference>
<dbReference type="SMART" id="SM00068">
    <property type="entry name" value="GHB"/>
    <property type="match status" value="1"/>
</dbReference>
<dbReference type="SUPFAM" id="SSF57501">
    <property type="entry name" value="Cystine-knot cytokines"/>
    <property type="match status" value="1"/>
</dbReference>
<dbReference type="PROSITE" id="PS00261">
    <property type="entry name" value="GLYCO_HORMONE_BETA_1"/>
    <property type="match status" value="1"/>
</dbReference>
<dbReference type="PROSITE" id="PS00689">
    <property type="entry name" value="GLYCO_HORMONE_BETA_2"/>
    <property type="match status" value="1"/>
</dbReference>
<feature type="signal peptide" evidence="1">
    <location>
        <begin position="1"/>
        <end position="20"/>
    </location>
</feature>
<feature type="chain" id="PRO_0000226050" description="Lutropin subunit beta">
    <location>
        <begin position="21"/>
        <end position="141"/>
    </location>
</feature>
<feature type="glycosylation site" description="N-linked (GlcNAc...) asparagine" evidence="2">
    <location>
        <position position="33"/>
    </location>
</feature>
<feature type="glycosylation site" description="N-linked (GlcNAc...) asparagine" evidence="2">
    <location>
        <position position="50"/>
    </location>
</feature>
<feature type="disulfide bond" evidence="1">
    <location>
        <begin position="29"/>
        <end position="77"/>
    </location>
</feature>
<feature type="disulfide bond" evidence="1">
    <location>
        <begin position="43"/>
        <end position="92"/>
    </location>
</feature>
<feature type="disulfide bond" evidence="1">
    <location>
        <begin position="46"/>
        <end position="130"/>
    </location>
</feature>
<feature type="disulfide bond" evidence="1">
    <location>
        <begin position="54"/>
        <end position="108"/>
    </location>
</feature>
<feature type="disulfide bond" evidence="1">
    <location>
        <begin position="58"/>
        <end position="110"/>
    </location>
</feature>
<feature type="disulfide bond" evidence="1">
    <location>
        <begin position="113"/>
        <end position="120"/>
    </location>
</feature>
<accession>Q2Q1P1</accession>
<name>LSHB_GORGO</name>
<gene>
    <name type="primary">LHB</name>
</gene>
<protein>
    <recommendedName>
        <fullName>Lutropin subunit beta</fullName>
        <shortName>Lutropin beta chain</shortName>
    </recommendedName>
    <alternativeName>
        <fullName>Luteinizing hormone subunit beta</fullName>
        <shortName>LH-B</shortName>
        <shortName>LSH-B</shortName>
        <shortName>LSH-beta</shortName>
    </alternativeName>
</protein>
<evidence type="ECO:0000250" key="1"/>
<evidence type="ECO:0000255" key="2"/>
<evidence type="ECO:0000305" key="3"/>
<keyword id="KW-1015">Disulfide bond</keyword>
<keyword id="KW-0325">Glycoprotein</keyword>
<keyword id="KW-0372">Hormone</keyword>
<keyword id="KW-1185">Reference proteome</keyword>
<keyword id="KW-0964">Secreted</keyword>
<keyword id="KW-0732">Signal</keyword>
<reference key="1">
    <citation type="submission" date="2005-10" db="EMBL/GenBank/DDBJ databases">
        <title>What is the evidence for the functionality of CGB1 and CGB2?</title>
        <authorList>
            <person name="Hallast P."/>
            <person name="Rull K."/>
            <person name="Laan M."/>
        </authorList>
    </citation>
    <scope>NUCLEOTIDE SEQUENCE [GENOMIC DNA]</scope>
</reference>
<comment type="function">
    <text evidence="1">Promotes spermatogenesis and ovulation by stimulating the testes and ovaries to synthesize steroids.</text>
</comment>
<comment type="subunit">
    <text evidence="1">Heterodimer of a common alpha chain and a unique beta chain which confers biological specificity to thyrotropin, lutropin, follitropin and gonadotropin.</text>
</comment>
<comment type="subcellular location">
    <subcellularLocation>
        <location>Secreted</location>
    </subcellularLocation>
</comment>
<comment type="similarity">
    <text evidence="3">Belongs to the glycoprotein hormones subunit beta family.</text>
</comment>
<sequence length="141" mass="15262">MEMLQGLLLLLLLSMGGAWASREPLRPRCRPINATLAVEKEGCPVCITVNTTICAGYCPTMMRVLQGVLPPLPQVVCTYRDVRFESIXLPGCPRGVDPMVSFPVALSCRCGPCHRSTSDCGGPNDHPLTCDHPQLSGLLFL</sequence>
<organism>
    <name type="scientific">Gorilla gorilla gorilla</name>
    <name type="common">Western lowland gorilla</name>
    <dbReference type="NCBI Taxonomy" id="9595"/>
    <lineage>
        <taxon>Eukaryota</taxon>
        <taxon>Metazoa</taxon>
        <taxon>Chordata</taxon>
        <taxon>Craniata</taxon>
        <taxon>Vertebrata</taxon>
        <taxon>Euteleostomi</taxon>
        <taxon>Mammalia</taxon>
        <taxon>Eutheria</taxon>
        <taxon>Euarchontoglires</taxon>
        <taxon>Primates</taxon>
        <taxon>Haplorrhini</taxon>
        <taxon>Catarrhini</taxon>
        <taxon>Hominidae</taxon>
        <taxon>Gorilla</taxon>
    </lineage>
</organism>
<proteinExistence type="inferred from homology"/>